<sequence>MSVFKGEVTTLPPDKSISHRAALIGALAEGVTEITNFSGGFDNQSTLGVLGACGIPLTQEEVPGPWGGTIRRVVIESKGLWSFRPSGAPLECNNSGSTMRMMAGILAGQPFGSELVGDGSLMKRPMQRVAGPLRDMGAGVELSESGTAPMRIAGTKELRPIVYRLPVPSAQVKSLVAFAALHAEGESRIIEPVLSRDHTELMLGLEASEVDGERVIVVPGRRRIEARPFLVPADPSAACFIVALALLAPGSEIMIRDVCLNPTRAAFLDIMIAAGGQITIENRRTVGGEDIGDILARGGGVLEPLSISDPGVVARVIDEIPMLAVLSVFASGSFEVSNAGELRTKECDRLNALAVNLQRLGCLCEESPDGMRVSGGVRAQHSPVVVECFDDHRIAMSFAIAARATGMDIELSDSAVVGVSFPNFFALLESLEV</sequence>
<proteinExistence type="inferred from homology"/>
<reference key="1">
    <citation type="submission" date="2007-03" db="EMBL/GenBank/DDBJ databases">
        <title>Complete sequence of Prosthecochloris vibrioformis DSM 265.</title>
        <authorList>
            <consortium name="US DOE Joint Genome Institute"/>
            <person name="Copeland A."/>
            <person name="Lucas S."/>
            <person name="Lapidus A."/>
            <person name="Barry K."/>
            <person name="Detter J.C."/>
            <person name="Glavina del Rio T."/>
            <person name="Hammon N."/>
            <person name="Israni S."/>
            <person name="Pitluck S."/>
            <person name="Schmutz J."/>
            <person name="Larimer F."/>
            <person name="Land M."/>
            <person name="Hauser L."/>
            <person name="Mikhailova N."/>
            <person name="Li T."/>
            <person name="Overmann J."/>
            <person name="Schuster S.C."/>
            <person name="Bryant D.A."/>
            <person name="Richardson P."/>
        </authorList>
    </citation>
    <scope>NUCLEOTIDE SEQUENCE [LARGE SCALE GENOMIC DNA]</scope>
    <source>
        <strain>DSM 265 / 1930</strain>
    </source>
</reference>
<comment type="function">
    <text evidence="1">Catalyzes the transfer of the enolpyruvyl moiety of phosphoenolpyruvate (PEP) to the 5-hydroxyl of shikimate-3-phosphate (S3P) to produce enolpyruvyl shikimate-3-phosphate and inorganic phosphate.</text>
</comment>
<comment type="catalytic activity">
    <reaction evidence="1">
        <text>3-phosphoshikimate + phosphoenolpyruvate = 5-O-(1-carboxyvinyl)-3-phosphoshikimate + phosphate</text>
        <dbReference type="Rhea" id="RHEA:21256"/>
        <dbReference type="ChEBI" id="CHEBI:43474"/>
        <dbReference type="ChEBI" id="CHEBI:57701"/>
        <dbReference type="ChEBI" id="CHEBI:58702"/>
        <dbReference type="ChEBI" id="CHEBI:145989"/>
        <dbReference type="EC" id="2.5.1.19"/>
    </reaction>
    <physiologicalReaction direction="left-to-right" evidence="1">
        <dbReference type="Rhea" id="RHEA:21257"/>
    </physiologicalReaction>
</comment>
<comment type="pathway">
    <text evidence="1">Metabolic intermediate biosynthesis; chorismate biosynthesis; chorismate from D-erythrose 4-phosphate and phosphoenolpyruvate: step 6/7.</text>
</comment>
<comment type="subunit">
    <text evidence="1">Monomer.</text>
</comment>
<comment type="subcellular location">
    <subcellularLocation>
        <location evidence="1">Cytoplasm</location>
    </subcellularLocation>
</comment>
<comment type="similarity">
    <text evidence="1">Belongs to the EPSP synthase family.</text>
</comment>
<name>AROA_CHLPM</name>
<gene>
    <name evidence="1" type="primary">aroA</name>
    <name type="ordered locus">Cvib_0349</name>
</gene>
<protein>
    <recommendedName>
        <fullName evidence="1">3-phosphoshikimate 1-carboxyvinyltransferase</fullName>
        <ecNumber evidence="1">2.5.1.19</ecNumber>
    </recommendedName>
    <alternativeName>
        <fullName evidence="1">5-enolpyruvylshikimate-3-phosphate synthase</fullName>
        <shortName evidence="1">EPSP synthase</shortName>
        <shortName evidence="1">EPSPS</shortName>
    </alternativeName>
</protein>
<accession>A4SD12</accession>
<dbReference type="EC" id="2.5.1.19" evidence="1"/>
<dbReference type="EMBL" id="CP000607">
    <property type="protein sequence ID" value="ABP36371.1"/>
    <property type="molecule type" value="Genomic_DNA"/>
</dbReference>
<dbReference type="SMR" id="A4SD12"/>
<dbReference type="STRING" id="290318.Cvib_0349"/>
<dbReference type="KEGG" id="pvi:Cvib_0349"/>
<dbReference type="eggNOG" id="COG0128">
    <property type="taxonomic scope" value="Bacteria"/>
</dbReference>
<dbReference type="HOGENOM" id="CLU_024321_0_1_10"/>
<dbReference type="OrthoDB" id="9809920at2"/>
<dbReference type="UniPathway" id="UPA00053">
    <property type="reaction ID" value="UER00089"/>
</dbReference>
<dbReference type="GO" id="GO:0005737">
    <property type="term" value="C:cytoplasm"/>
    <property type="evidence" value="ECO:0007669"/>
    <property type="project" value="UniProtKB-SubCell"/>
</dbReference>
<dbReference type="GO" id="GO:0003866">
    <property type="term" value="F:3-phosphoshikimate 1-carboxyvinyltransferase activity"/>
    <property type="evidence" value="ECO:0007669"/>
    <property type="project" value="UniProtKB-UniRule"/>
</dbReference>
<dbReference type="GO" id="GO:0008652">
    <property type="term" value="P:amino acid biosynthetic process"/>
    <property type="evidence" value="ECO:0007669"/>
    <property type="project" value="UniProtKB-KW"/>
</dbReference>
<dbReference type="GO" id="GO:0009073">
    <property type="term" value="P:aromatic amino acid family biosynthetic process"/>
    <property type="evidence" value="ECO:0007669"/>
    <property type="project" value="UniProtKB-KW"/>
</dbReference>
<dbReference type="GO" id="GO:0009423">
    <property type="term" value="P:chorismate biosynthetic process"/>
    <property type="evidence" value="ECO:0007669"/>
    <property type="project" value="UniProtKB-UniRule"/>
</dbReference>
<dbReference type="CDD" id="cd01556">
    <property type="entry name" value="EPSP_synthase"/>
    <property type="match status" value="1"/>
</dbReference>
<dbReference type="FunFam" id="3.65.10.10:FF:000005">
    <property type="entry name" value="3-phosphoshikimate 1-carboxyvinyltransferase"/>
    <property type="match status" value="1"/>
</dbReference>
<dbReference type="Gene3D" id="3.65.10.10">
    <property type="entry name" value="Enolpyruvate transferase domain"/>
    <property type="match status" value="2"/>
</dbReference>
<dbReference type="HAMAP" id="MF_00210">
    <property type="entry name" value="EPSP_synth"/>
    <property type="match status" value="1"/>
</dbReference>
<dbReference type="InterPro" id="IPR001986">
    <property type="entry name" value="Enolpyruvate_Tfrase_dom"/>
</dbReference>
<dbReference type="InterPro" id="IPR036968">
    <property type="entry name" value="Enolpyruvate_Tfrase_sf"/>
</dbReference>
<dbReference type="InterPro" id="IPR006264">
    <property type="entry name" value="EPSP_synthase"/>
</dbReference>
<dbReference type="InterPro" id="IPR023193">
    <property type="entry name" value="EPSP_synthase_CS"/>
</dbReference>
<dbReference type="InterPro" id="IPR013792">
    <property type="entry name" value="RNA3'P_cycl/enolpyr_Trfase_a/b"/>
</dbReference>
<dbReference type="NCBIfam" id="TIGR01356">
    <property type="entry name" value="aroA"/>
    <property type="match status" value="1"/>
</dbReference>
<dbReference type="PANTHER" id="PTHR21090">
    <property type="entry name" value="AROM/DEHYDROQUINATE SYNTHASE"/>
    <property type="match status" value="1"/>
</dbReference>
<dbReference type="PANTHER" id="PTHR21090:SF5">
    <property type="entry name" value="PENTAFUNCTIONAL AROM POLYPEPTIDE"/>
    <property type="match status" value="1"/>
</dbReference>
<dbReference type="Pfam" id="PF00275">
    <property type="entry name" value="EPSP_synthase"/>
    <property type="match status" value="1"/>
</dbReference>
<dbReference type="PIRSF" id="PIRSF000505">
    <property type="entry name" value="EPSPS"/>
    <property type="match status" value="1"/>
</dbReference>
<dbReference type="SUPFAM" id="SSF55205">
    <property type="entry name" value="EPT/RTPC-like"/>
    <property type="match status" value="1"/>
</dbReference>
<dbReference type="PROSITE" id="PS00885">
    <property type="entry name" value="EPSP_SYNTHASE_2"/>
    <property type="match status" value="1"/>
</dbReference>
<organism>
    <name type="scientific">Chlorobium phaeovibrioides (strain DSM 265 / 1930)</name>
    <name type="common">Prosthecochloris vibrioformis (strain DSM 265)</name>
    <dbReference type="NCBI Taxonomy" id="290318"/>
    <lineage>
        <taxon>Bacteria</taxon>
        <taxon>Pseudomonadati</taxon>
        <taxon>Chlorobiota</taxon>
        <taxon>Chlorobiia</taxon>
        <taxon>Chlorobiales</taxon>
        <taxon>Chlorobiaceae</taxon>
        <taxon>Chlorobium/Pelodictyon group</taxon>
        <taxon>Chlorobium</taxon>
    </lineage>
</organism>
<feature type="chain" id="PRO_1000099741" description="3-phosphoshikimate 1-carboxyvinyltransferase">
    <location>
        <begin position="1"/>
        <end position="433"/>
    </location>
</feature>
<feature type="active site" description="Proton acceptor" evidence="1">
    <location>
        <position position="318"/>
    </location>
</feature>
<feature type="binding site" evidence="1">
    <location>
        <position position="15"/>
    </location>
    <ligand>
        <name>3-phosphoshikimate</name>
        <dbReference type="ChEBI" id="CHEBI:145989"/>
    </ligand>
</feature>
<feature type="binding site" evidence="1">
    <location>
        <position position="15"/>
    </location>
    <ligand>
        <name>phosphoenolpyruvate</name>
        <dbReference type="ChEBI" id="CHEBI:58702"/>
    </ligand>
</feature>
<feature type="binding site" evidence="1">
    <location>
        <position position="16"/>
    </location>
    <ligand>
        <name>3-phosphoshikimate</name>
        <dbReference type="ChEBI" id="CHEBI:145989"/>
    </ligand>
</feature>
<feature type="binding site" evidence="1">
    <location>
        <position position="20"/>
    </location>
    <ligand>
        <name>3-phosphoshikimate</name>
        <dbReference type="ChEBI" id="CHEBI:145989"/>
    </ligand>
</feature>
<feature type="binding site" evidence="1">
    <location>
        <position position="96"/>
    </location>
    <ligand>
        <name>phosphoenolpyruvate</name>
        <dbReference type="ChEBI" id="CHEBI:58702"/>
    </ligand>
</feature>
<feature type="binding site" evidence="1">
    <location>
        <position position="124"/>
    </location>
    <ligand>
        <name>phosphoenolpyruvate</name>
        <dbReference type="ChEBI" id="CHEBI:58702"/>
    </ligand>
</feature>
<feature type="binding site" evidence="1">
    <location>
        <position position="169"/>
    </location>
    <ligand>
        <name>3-phosphoshikimate</name>
        <dbReference type="ChEBI" id="CHEBI:145989"/>
    </ligand>
</feature>
<feature type="binding site" evidence="1">
    <location>
        <position position="171"/>
    </location>
    <ligand>
        <name>3-phosphoshikimate</name>
        <dbReference type="ChEBI" id="CHEBI:145989"/>
    </ligand>
</feature>
<feature type="binding site" evidence="1">
    <location>
        <position position="171"/>
    </location>
    <ligand>
        <name>phosphoenolpyruvate</name>
        <dbReference type="ChEBI" id="CHEBI:58702"/>
    </ligand>
</feature>
<feature type="binding site" evidence="1">
    <location>
        <position position="318"/>
    </location>
    <ligand>
        <name>3-phosphoshikimate</name>
        <dbReference type="ChEBI" id="CHEBI:145989"/>
    </ligand>
</feature>
<feature type="binding site" evidence="1">
    <location>
        <position position="345"/>
    </location>
    <ligand>
        <name>3-phosphoshikimate</name>
        <dbReference type="ChEBI" id="CHEBI:145989"/>
    </ligand>
</feature>
<feature type="binding site" evidence="1">
    <location>
        <position position="349"/>
    </location>
    <ligand>
        <name>phosphoenolpyruvate</name>
        <dbReference type="ChEBI" id="CHEBI:58702"/>
    </ligand>
</feature>
<feature type="binding site" evidence="1">
    <location>
        <position position="393"/>
    </location>
    <ligand>
        <name>phosphoenolpyruvate</name>
        <dbReference type="ChEBI" id="CHEBI:58702"/>
    </ligand>
</feature>
<evidence type="ECO:0000255" key="1">
    <source>
        <dbReference type="HAMAP-Rule" id="MF_00210"/>
    </source>
</evidence>
<keyword id="KW-0028">Amino-acid biosynthesis</keyword>
<keyword id="KW-0057">Aromatic amino acid biosynthesis</keyword>
<keyword id="KW-0963">Cytoplasm</keyword>
<keyword id="KW-0808">Transferase</keyword>